<keyword id="KW-0007">Acetylation</keyword>
<keyword id="KW-1185">Reference proteome</keyword>
<comment type="subunit">
    <text evidence="1">Interacts with XRN2; the interaction is direct.</text>
</comment>
<comment type="similarity">
    <text evidence="3">Belongs to the CARF family.</text>
</comment>
<name>C2AIL_MOUSE</name>
<sequence length="116" mass="13209">MVGGEASAAVEKLVSGVRQAADFAEQFRSYSESEKQWKARMEFILRHLPDYRDPPDGGGRLDQLLSLSMVWANHLFLGCSYNKDLLDKVMEMADGIEVEDLPQFTTRSELMRKHQS</sequence>
<accession>Q9D211</accession>
<accession>B1AU49</accession>
<dbReference type="EMBL" id="AB041653">
    <property type="protein sequence ID" value="BAB93546.1"/>
    <property type="molecule type" value="mRNA"/>
</dbReference>
<dbReference type="EMBL" id="AK020751">
    <property type="protein sequence ID" value="BAB32201.1"/>
    <property type="molecule type" value="mRNA"/>
</dbReference>
<dbReference type="EMBL" id="AK150573">
    <property type="protein sequence ID" value="BAE29668.1"/>
    <property type="molecule type" value="mRNA"/>
</dbReference>
<dbReference type="EMBL" id="AK171740">
    <property type="protein sequence ID" value="BAE42643.1"/>
    <property type="molecule type" value="mRNA"/>
</dbReference>
<dbReference type="EMBL" id="AL669920">
    <property type="status" value="NOT_ANNOTATED_CDS"/>
    <property type="molecule type" value="Genomic_DNA"/>
</dbReference>
<dbReference type="EMBL" id="BC116362">
    <property type="protein sequence ID" value="AAI16363.1"/>
    <property type="molecule type" value="mRNA"/>
</dbReference>
<dbReference type="EMBL" id="BC116363">
    <property type="protein sequence ID" value="AAI16364.1"/>
    <property type="molecule type" value="mRNA"/>
</dbReference>
<dbReference type="CCDS" id="CCDS24663.1"/>
<dbReference type="RefSeq" id="NP_084252.1">
    <property type="nucleotide sequence ID" value="NM_029976.3"/>
</dbReference>
<dbReference type="SMR" id="Q9D211"/>
<dbReference type="BioGRID" id="206699">
    <property type="interactions" value="2"/>
</dbReference>
<dbReference type="FunCoup" id="Q9D211">
    <property type="interactions" value="1581"/>
</dbReference>
<dbReference type="STRING" id="10090.ENSMUSP00000099824"/>
<dbReference type="PhosphoSitePlus" id="Q9D211"/>
<dbReference type="PaxDb" id="10090-ENSMUSP00000099824"/>
<dbReference type="PeptideAtlas" id="Q9D211"/>
<dbReference type="ProteomicsDB" id="281710"/>
<dbReference type="Pumba" id="Q9D211"/>
<dbReference type="Antibodypedia" id="64397">
    <property type="antibodies" value="37 antibodies from 10 providers"/>
</dbReference>
<dbReference type="Ensembl" id="ENSMUST00000102763.5">
    <property type="protein sequence ID" value="ENSMUSP00000099824.5"/>
    <property type="gene ID" value="ENSMUSG00000020392.9"/>
</dbReference>
<dbReference type="GeneID" id="52626"/>
<dbReference type="KEGG" id="mmu:52626"/>
<dbReference type="UCSC" id="uc007ius.2">
    <property type="organism name" value="mouse"/>
</dbReference>
<dbReference type="AGR" id="MGI:1261797"/>
<dbReference type="CTD" id="91368"/>
<dbReference type="MGI" id="MGI:1261797">
    <property type="gene designation" value="Cdkn2aipnl"/>
</dbReference>
<dbReference type="VEuPathDB" id="HostDB:ENSMUSG00000020392"/>
<dbReference type="eggNOG" id="ENOG502S4FT">
    <property type="taxonomic scope" value="Eukaryota"/>
</dbReference>
<dbReference type="GeneTree" id="ENSGT00940000157177"/>
<dbReference type="HOGENOM" id="CLU_148771_0_0_1"/>
<dbReference type="InParanoid" id="Q9D211"/>
<dbReference type="OMA" id="SDKHWEA"/>
<dbReference type="OrthoDB" id="2359216at2759"/>
<dbReference type="PhylomeDB" id="Q9D211"/>
<dbReference type="TreeFam" id="TF333807"/>
<dbReference type="BioGRID-ORCS" id="52626">
    <property type="hits" value="4 hits in 76 CRISPR screens"/>
</dbReference>
<dbReference type="ChiTaRS" id="Cdkn2aipnl">
    <property type="organism name" value="mouse"/>
</dbReference>
<dbReference type="PRO" id="PR:Q9D211"/>
<dbReference type="Proteomes" id="UP000000589">
    <property type="component" value="Chromosome 11"/>
</dbReference>
<dbReference type="RNAct" id="Q9D211">
    <property type="molecule type" value="protein"/>
</dbReference>
<dbReference type="Bgee" id="ENSMUSG00000020392">
    <property type="expression patterns" value="Expressed in embryonic post-anal tail and 265 other cell types or tissues"/>
</dbReference>
<dbReference type="ExpressionAtlas" id="Q9D211">
    <property type="expression patterns" value="baseline and differential"/>
</dbReference>
<dbReference type="InterPro" id="IPR021859">
    <property type="entry name" value="XTBD"/>
</dbReference>
<dbReference type="Pfam" id="PF11952">
    <property type="entry name" value="XTBD"/>
    <property type="match status" value="1"/>
</dbReference>
<dbReference type="PROSITE" id="PS51827">
    <property type="entry name" value="XTBD"/>
    <property type="match status" value="1"/>
</dbReference>
<gene>
    <name type="primary">Cdkn2aipnl</name>
    <name type="synonym">D11Ertd497e</name>
    <name type="ORF">MNCb-1520</name>
</gene>
<evidence type="ECO:0000250" key="1">
    <source>
        <dbReference type="UniProtKB" id="Q96HQ2"/>
    </source>
</evidence>
<evidence type="ECO:0000255" key="2">
    <source>
        <dbReference type="PROSITE-ProRule" id="PRU01171"/>
    </source>
</evidence>
<evidence type="ECO:0000305" key="3"/>
<proteinExistence type="inferred from homology"/>
<organism>
    <name type="scientific">Mus musculus</name>
    <name type="common">Mouse</name>
    <dbReference type="NCBI Taxonomy" id="10090"/>
    <lineage>
        <taxon>Eukaryota</taxon>
        <taxon>Metazoa</taxon>
        <taxon>Chordata</taxon>
        <taxon>Craniata</taxon>
        <taxon>Vertebrata</taxon>
        <taxon>Euteleostomi</taxon>
        <taxon>Mammalia</taxon>
        <taxon>Eutheria</taxon>
        <taxon>Euarchontoglires</taxon>
        <taxon>Glires</taxon>
        <taxon>Rodentia</taxon>
        <taxon>Myomorpha</taxon>
        <taxon>Muroidea</taxon>
        <taxon>Muridae</taxon>
        <taxon>Murinae</taxon>
        <taxon>Mus</taxon>
        <taxon>Mus</taxon>
    </lineage>
</organism>
<feature type="chain" id="PRO_0000325927" description="CDKN2AIP N-terminal-like protein">
    <location>
        <begin position="1"/>
        <end position="116"/>
    </location>
</feature>
<feature type="domain" description="XRN2-binding (XTBD)" evidence="2">
    <location>
        <begin position="24"/>
        <end position="116"/>
    </location>
</feature>
<feature type="modified residue" description="N-acetylmethionine" evidence="1">
    <location>
        <position position="1"/>
    </location>
</feature>
<reference key="1">
    <citation type="submission" date="2000-04" db="EMBL/GenBank/DDBJ databases">
        <title>isolation of full-length cDNA clones from mouse brain cDNA library made by oligo-capping method.</title>
        <authorList>
            <person name="Osada N."/>
            <person name="Kusuda J."/>
            <person name="Tanuma R."/>
            <person name="Ito A."/>
            <person name="Hirata M."/>
            <person name="Sugano S."/>
            <person name="Hashimoto K."/>
        </authorList>
    </citation>
    <scope>NUCLEOTIDE SEQUENCE [LARGE SCALE MRNA]</scope>
    <source>
        <strain>C57BL/6J</strain>
        <tissue>Brain</tissue>
    </source>
</reference>
<reference key="2">
    <citation type="journal article" date="2005" name="Science">
        <title>The transcriptional landscape of the mammalian genome.</title>
        <authorList>
            <person name="Carninci P."/>
            <person name="Kasukawa T."/>
            <person name="Katayama S."/>
            <person name="Gough J."/>
            <person name="Frith M.C."/>
            <person name="Maeda N."/>
            <person name="Oyama R."/>
            <person name="Ravasi T."/>
            <person name="Lenhard B."/>
            <person name="Wells C."/>
            <person name="Kodzius R."/>
            <person name="Shimokawa K."/>
            <person name="Bajic V.B."/>
            <person name="Brenner S.E."/>
            <person name="Batalov S."/>
            <person name="Forrest A.R."/>
            <person name="Zavolan M."/>
            <person name="Davis M.J."/>
            <person name="Wilming L.G."/>
            <person name="Aidinis V."/>
            <person name="Allen J.E."/>
            <person name="Ambesi-Impiombato A."/>
            <person name="Apweiler R."/>
            <person name="Aturaliya R.N."/>
            <person name="Bailey T.L."/>
            <person name="Bansal M."/>
            <person name="Baxter L."/>
            <person name="Beisel K.W."/>
            <person name="Bersano T."/>
            <person name="Bono H."/>
            <person name="Chalk A.M."/>
            <person name="Chiu K.P."/>
            <person name="Choudhary V."/>
            <person name="Christoffels A."/>
            <person name="Clutterbuck D.R."/>
            <person name="Crowe M.L."/>
            <person name="Dalla E."/>
            <person name="Dalrymple B.P."/>
            <person name="de Bono B."/>
            <person name="Della Gatta G."/>
            <person name="di Bernardo D."/>
            <person name="Down T."/>
            <person name="Engstrom P."/>
            <person name="Fagiolini M."/>
            <person name="Faulkner G."/>
            <person name="Fletcher C.F."/>
            <person name="Fukushima T."/>
            <person name="Furuno M."/>
            <person name="Futaki S."/>
            <person name="Gariboldi M."/>
            <person name="Georgii-Hemming P."/>
            <person name="Gingeras T.R."/>
            <person name="Gojobori T."/>
            <person name="Green R.E."/>
            <person name="Gustincich S."/>
            <person name="Harbers M."/>
            <person name="Hayashi Y."/>
            <person name="Hensch T.K."/>
            <person name="Hirokawa N."/>
            <person name="Hill D."/>
            <person name="Huminiecki L."/>
            <person name="Iacono M."/>
            <person name="Ikeo K."/>
            <person name="Iwama A."/>
            <person name="Ishikawa T."/>
            <person name="Jakt M."/>
            <person name="Kanapin A."/>
            <person name="Katoh M."/>
            <person name="Kawasawa Y."/>
            <person name="Kelso J."/>
            <person name="Kitamura H."/>
            <person name="Kitano H."/>
            <person name="Kollias G."/>
            <person name="Krishnan S.P."/>
            <person name="Kruger A."/>
            <person name="Kummerfeld S.K."/>
            <person name="Kurochkin I.V."/>
            <person name="Lareau L.F."/>
            <person name="Lazarevic D."/>
            <person name="Lipovich L."/>
            <person name="Liu J."/>
            <person name="Liuni S."/>
            <person name="McWilliam S."/>
            <person name="Madan Babu M."/>
            <person name="Madera M."/>
            <person name="Marchionni L."/>
            <person name="Matsuda H."/>
            <person name="Matsuzawa S."/>
            <person name="Miki H."/>
            <person name="Mignone F."/>
            <person name="Miyake S."/>
            <person name="Morris K."/>
            <person name="Mottagui-Tabar S."/>
            <person name="Mulder N."/>
            <person name="Nakano N."/>
            <person name="Nakauchi H."/>
            <person name="Ng P."/>
            <person name="Nilsson R."/>
            <person name="Nishiguchi S."/>
            <person name="Nishikawa S."/>
            <person name="Nori F."/>
            <person name="Ohara O."/>
            <person name="Okazaki Y."/>
            <person name="Orlando V."/>
            <person name="Pang K.C."/>
            <person name="Pavan W.J."/>
            <person name="Pavesi G."/>
            <person name="Pesole G."/>
            <person name="Petrovsky N."/>
            <person name="Piazza S."/>
            <person name="Reed J."/>
            <person name="Reid J.F."/>
            <person name="Ring B.Z."/>
            <person name="Ringwald M."/>
            <person name="Rost B."/>
            <person name="Ruan Y."/>
            <person name="Salzberg S.L."/>
            <person name="Sandelin A."/>
            <person name="Schneider C."/>
            <person name="Schoenbach C."/>
            <person name="Sekiguchi K."/>
            <person name="Semple C.A."/>
            <person name="Seno S."/>
            <person name="Sessa L."/>
            <person name="Sheng Y."/>
            <person name="Shibata Y."/>
            <person name="Shimada H."/>
            <person name="Shimada K."/>
            <person name="Silva D."/>
            <person name="Sinclair B."/>
            <person name="Sperling S."/>
            <person name="Stupka E."/>
            <person name="Sugiura K."/>
            <person name="Sultana R."/>
            <person name="Takenaka Y."/>
            <person name="Taki K."/>
            <person name="Tammoja K."/>
            <person name="Tan S.L."/>
            <person name="Tang S."/>
            <person name="Taylor M.S."/>
            <person name="Tegner J."/>
            <person name="Teichmann S.A."/>
            <person name="Ueda H.R."/>
            <person name="van Nimwegen E."/>
            <person name="Verardo R."/>
            <person name="Wei C.L."/>
            <person name="Yagi K."/>
            <person name="Yamanishi H."/>
            <person name="Zabarovsky E."/>
            <person name="Zhu S."/>
            <person name="Zimmer A."/>
            <person name="Hide W."/>
            <person name="Bult C."/>
            <person name="Grimmond S.M."/>
            <person name="Teasdale R.D."/>
            <person name="Liu E.T."/>
            <person name="Brusic V."/>
            <person name="Quackenbush J."/>
            <person name="Wahlestedt C."/>
            <person name="Mattick J.S."/>
            <person name="Hume D.A."/>
            <person name="Kai C."/>
            <person name="Sasaki D."/>
            <person name="Tomaru Y."/>
            <person name="Fukuda S."/>
            <person name="Kanamori-Katayama M."/>
            <person name="Suzuki M."/>
            <person name="Aoki J."/>
            <person name="Arakawa T."/>
            <person name="Iida J."/>
            <person name="Imamura K."/>
            <person name="Itoh M."/>
            <person name="Kato T."/>
            <person name="Kawaji H."/>
            <person name="Kawagashira N."/>
            <person name="Kawashima T."/>
            <person name="Kojima M."/>
            <person name="Kondo S."/>
            <person name="Konno H."/>
            <person name="Nakano K."/>
            <person name="Ninomiya N."/>
            <person name="Nishio T."/>
            <person name="Okada M."/>
            <person name="Plessy C."/>
            <person name="Shibata K."/>
            <person name="Shiraki T."/>
            <person name="Suzuki S."/>
            <person name="Tagami M."/>
            <person name="Waki K."/>
            <person name="Watahiki A."/>
            <person name="Okamura-Oho Y."/>
            <person name="Suzuki H."/>
            <person name="Kawai J."/>
            <person name="Hayashizaki Y."/>
        </authorList>
    </citation>
    <scope>NUCLEOTIDE SEQUENCE [LARGE SCALE MRNA]</scope>
    <source>
        <strain>C57BL/6J</strain>
        <strain>NOD</strain>
        <tissue>Bone marrow</tissue>
        <tissue>Spleen</tissue>
        <tissue>Thymus</tissue>
    </source>
</reference>
<reference key="3">
    <citation type="journal article" date="2009" name="PLoS Biol.">
        <title>Lineage-specific biology revealed by a finished genome assembly of the mouse.</title>
        <authorList>
            <person name="Church D.M."/>
            <person name="Goodstadt L."/>
            <person name="Hillier L.W."/>
            <person name="Zody M.C."/>
            <person name="Goldstein S."/>
            <person name="She X."/>
            <person name="Bult C.J."/>
            <person name="Agarwala R."/>
            <person name="Cherry J.L."/>
            <person name="DiCuccio M."/>
            <person name="Hlavina W."/>
            <person name="Kapustin Y."/>
            <person name="Meric P."/>
            <person name="Maglott D."/>
            <person name="Birtle Z."/>
            <person name="Marques A.C."/>
            <person name="Graves T."/>
            <person name="Zhou S."/>
            <person name="Teague B."/>
            <person name="Potamousis K."/>
            <person name="Churas C."/>
            <person name="Place M."/>
            <person name="Herschleb J."/>
            <person name="Runnheim R."/>
            <person name="Forrest D."/>
            <person name="Amos-Landgraf J."/>
            <person name="Schwartz D.C."/>
            <person name="Cheng Z."/>
            <person name="Lindblad-Toh K."/>
            <person name="Eichler E.E."/>
            <person name="Ponting C.P."/>
        </authorList>
    </citation>
    <scope>NUCLEOTIDE SEQUENCE [LARGE SCALE GENOMIC DNA]</scope>
    <source>
        <strain>C57BL/6J</strain>
    </source>
</reference>
<reference key="4">
    <citation type="journal article" date="2004" name="Genome Res.">
        <title>The status, quality, and expansion of the NIH full-length cDNA project: the Mammalian Gene Collection (MGC).</title>
        <authorList>
            <consortium name="The MGC Project Team"/>
        </authorList>
    </citation>
    <scope>NUCLEOTIDE SEQUENCE [LARGE SCALE MRNA]</scope>
</reference>
<protein>
    <recommendedName>
        <fullName>CDKN2AIP N-terminal-like protein</fullName>
    </recommendedName>
    <alternativeName>
        <fullName>CDKN2A-interacting protein N-terminal-like protein</fullName>
    </alternativeName>
</protein>